<accession>Q605C1</accession>
<feature type="chain" id="PRO_0000233505" description="Small ribosomal subunit protein uS17">
    <location>
        <begin position="1"/>
        <end position="86"/>
    </location>
</feature>
<protein>
    <recommendedName>
        <fullName evidence="1">Small ribosomal subunit protein uS17</fullName>
    </recommendedName>
    <alternativeName>
        <fullName evidence="2">30S ribosomal protein S17</fullName>
    </alternativeName>
</protein>
<organism>
    <name type="scientific">Methylococcus capsulatus (strain ATCC 33009 / NCIMB 11132 / Bath)</name>
    <dbReference type="NCBI Taxonomy" id="243233"/>
    <lineage>
        <taxon>Bacteria</taxon>
        <taxon>Pseudomonadati</taxon>
        <taxon>Pseudomonadota</taxon>
        <taxon>Gammaproteobacteria</taxon>
        <taxon>Methylococcales</taxon>
        <taxon>Methylococcaceae</taxon>
        <taxon>Methylococcus</taxon>
    </lineage>
</organism>
<gene>
    <name evidence="1" type="primary">rpsQ</name>
    <name type="ordered locus">MCA2363</name>
</gene>
<evidence type="ECO:0000255" key="1">
    <source>
        <dbReference type="HAMAP-Rule" id="MF_01345"/>
    </source>
</evidence>
<evidence type="ECO:0000305" key="2"/>
<comment type="function">
    <text evidence="1">One of the primary rRNA binding proteins, it binds specifically to the 5'-end of 16S ribosomal RNA.</text>
</comment>
<comment type="subunit">
    <text evidence="1">Part of the 30S ribosomal subunit.</text>
</comment>
<comment type="similarity">
    <text evidence="1">Belongs to the universal ribosomal protein uS17 family.</text>
</comment>
<proteinExistence type="inferred from homology"/>
<sequence>MTASEGRVRSVTGRVVSNKMDRTIVVAIERQVSHPLYGKYIRRTTKVLAHDENNECSIGDLVTLHASRPISKKKAWTLGAIVERAV</sequence>
<dbReference type="EMBL" id="AE017282">
    <property type="protein sequence ID" value="AAU91472.1"/>
    <property type="molecule type" value="Genomic_DNA"/>
</dbReference>
<dbReference type="RefSeq" id="WP_010961591.1">
    <property type="nucleotide sequence ID" value="NC_002977.6"/>
</dbReference>
<dbReference type="SMR" id="Q605C1"/>
<dbReference type="STRING" id="243233.MCA2363"/>
<dbReference type="GeneID" id="88224565"/>
<dbReference type="KEGG" id="mca:MCA2363"/>
<dbReference type="eggNOG" id="COG0186">
    <property type="taxonomic scope" value="Bacteria"/>
</dbReference>
<dbReference type="HOGENOM" id="CLU_073626_1_1_6"/>
<dbReference type="Proteomes" id="UP000006821">
    <property type="component" value="Chromosome"/>
</dbReference>
<dbReference type="GO" id="GO:0022627">
    <property type="term" value="C:cytosolic small ribosomal subunit"/>
    <property type="evidence" value="ECO:0007669"/>
    <property type="project" value="TreeGrafter"/>
</dbReference>
<dbReference type="GO" id="GO:0019843">
    <property type="term" value="F:rRNA binding"/>
    <property type="evidence" value="ECO:0007669"/>
    <property type="project" value="UniProtKB-UniRule"/>
</dbReference>
<dbReference type="GO" id="GO:0003735">
    <property type="term" value="F:structural constituent of ribosome"/>
    <property type="evidence" value="ECO:0007669"/>
    <property type="project" value="InterPro"/>
</dbReference>
<dbReference type="GO" id="GO:0006412">
    <property type="term" value="P:translation"/>
    <property type="evidence" value="ECO:0007669"/>
    <property type="project" value="UniProtKB-UniRule"/>
</dbReference>
<dbReference type="CDD" id="cd00364">
    <property type="entry name" value="Ribosomal_uS17"/>
    <property type="match status" value="1"/>
</dbReference>
<dbReference type="Gene3D" id="2.40.50.140">
    <property type="entry name" value="Nucleic acid-binding proteins"/>
    <property type="match status" value="1"/>
</dbReference>
<dbReference type="HAMAP" id="MF_01345_B">
    <property type="entry name" value="Ribosomal_uS17_B"/>
    <property type="match status" value="1"/>
</dbReference>
<dbReference type="InterPro" id="IPR012340">
    <property type="entry name" value="NA-bd_OB-fold"/>
</dbReference>
<dbReference type="InterPro" id="IPR000266">
    <property type="entry name" value="Ribosomal_uS17"/>
</dbReference>
<dbReference type="InterPro" id="IPR019984">
    <property type="entry name" value="Ribosomal_uS17_bact/chlr"/>
</dbReference>
<dbReference type="NCBIfam" id="NF004123">
    <property type="entry name" value="PRK05610.1"/>
    <property type="match status" value="1"/>
</dbReference>
<dbReference type="NCBIfam" id="TIGR03635">
    <property type="entry name" value="uS17_bact"/>
    <property type="match status" value="1"/>
</dbReference>
<dbReference type="PANTHER" id="PTHR10744">
    <property type="entry name" value="40S RIBOSOMAL PROTEIN S11 FAMILY MEMBER"/>
    <property type="match status" value="1"/>
</dbReference>
<dbReference type="PANTHER" id="PTHR10744:SF1">
    <property type="entry name" value="SMALL RIBOSOMAL SUBUNIT PROTEIN US17M"/>
    <property type="match status" value="1"/>
</dbReference>
<dbReference type="Pfam" id="PF00366">
    <property type="entry name" value="Ribosomal_S17"/>
    <property type="match status" value="1"/>
</dbReference>
<dbReference type="PRINTS" id="PR00973">
    <property type="entry name" value="RIBOSOMALS17"/>
</dbReference>
<dbReference type="SUPFAM" id="SSF50249">
    <property type="entry name" value="Nucleic acid-binding proteins"/>
    <property type="match status" value="1"/>
</dbReference>
<name>RS17_METCA</name>
<keyword id="KW-1185">Reference proteome</keyword>
<keyword id="KW-0687">Ribonucleoprotein</keyword>
<keyword id="KW-0689">Ribosomal protein</keyword>
<keyword id="KW-0694">RNA-binding</keyword>
<keyword id="KW-0699">rRNA-binding</keyword>
<reference key="1">
    <citation type="journal article" date="2004" name="PLoS Biol.">
        <title>Genomic insights into methanotrophy: the complete genome sequence of Methylococcus capsulatus (Bath).</title>
        <authorList>
            <person name="Ward N.L."/>
            <person name="Larsen O."/>
            <person name="Sakwa J."/>
            <person name="Bruseth L."/>
            <person name="Khouri H.M."/>
            <person name="Durkin A.S."/>
            <person name="Dimitrov G."/>
            <person name="Jiang L."/>
            <person name="Scanlan D."/>
            <person name="Kang K.H."/>
            <person name="Lewis M.R."/>
            <person name="Nelson K.E."/>
            <person name="Methe B.A."/>
            <person name="Wu M."/>
            <person name="Heidelberg J.F."/>
            <person name="Paulsen I.T."/>
            <person name="Fouts D.E."/>
            <person name="Ravel J."/>
            <person name="Tettelin H."/>
            <person name="Ren Q."/>
            <person name="Read T.D."/>
            <person name="DeBoy R.T."/>
            <person name="Seshadri R."/>
            <person name="Salzberg S.L."/>
            <person name="Jensen H.B."/>
            <person name="Birkeland N.K."/>
            <person name="Nelson W.C."/>
            <person name="Dodson R.J."/>
            <person name="Grindhaug S.H."/>
            <person name="Holt I.E."/>
            <person name="Eidhammer I."/>
            <person name="Jonasen I."/>
            <person name="Vanaken S."/>
            <person name="Utterback T.R."/>
            <person name="Feldblyum T.V."/>
            <person name="Fraser C.M."/>
            <person name="Lillehaug J.R."/>
            <person name="Eisen J.A."/>
        </authorList>
    </citation>
    <scope>NUCLEOTIDE SEQUENCE [LARGE SCALE GENOMIC DNA]</scope>
    <source>
        <strain>ATCC 33009 / NCIMB 11132 / Bath</strain>
    </source>
</reference>